<evidence type="ECO:0000250" key="1"/>
<evidence type="ECO:0000250" key="2">
    <source>
        <dbReference type="UniProtKB" id="O09009"/>
    </source>
</evidence>
<evidence type="ECO:0000255" key="3"/>
<evidence type="ECO:0000305" key="4"/>
<protein>
    <recommendedName>
        <fullName evidence="4">Beta-1,3-N-acetylglucosaminyltransferase radical fringe</fullName>
        <ecNumber evidence="2">2.4.1.222</ecNumber>
    </recommendedName>
    <alternativeName>
        <fullName>O-fucosylpeptide 3-beta-N-acetylglucosaminyltransferase</fullName>
    </alternativeName>
</protein>
<gene>
    <name type="primary">rfng</name>
</gene>
<proteinExistence type="evidence at transcript level"/>
<name>RFNG_XENLA</name>
<sequence length="340" mass="38679">MKITYVGLIKVCFLVFLLLCATVLLNISWRQRDSSQSLQHCNSTCSAKYLETKLKEAHLTGRHKKWETYRLDAKPTSATGQGHQHFAKEPLQIKDLFIAVKTTKKYHGNRLNLLMQTWISRAKEQTFIFTDWEDQELRQKAGDQMVNTNCSAVHTRQALCCKMAVEYDKFVLSDKKWFCHLDDDNYLNLHALLDLLSTFSHSTDVYVGRPSLDHPVETVDRMKGDGSGSLKFWFATGGAGFCISRGLALKMSPWASMGNFISTAEKVRLPDDCTIGYIIEGMLDVKMQHSNLFHSHLEHLQRLPTESLLKQVTLSYGGPDNKWNVVRVNGAFSLAEDPTR</sequence>
<comment type="function">
    <text evidence="2">Glycosyltransferase that initiates the elongation of O-linked fucose residues attached to EGF-like repeats in the extracellular domain of Notch molecules.</text>
</comment>
<comment type="catalytic activity">
    <reaction evidence="2">
        <text>3-O-(alpha-L-fucosyl)-L-threonyl-[EGF-like domain protein] + UDP-N-acetyl-alpha-D-glucosamine = 3-O-(N-acetyl-beta-D-glucosaminyl-(1-&gt;3)-alpha-L-fucosyl)-L-threonyl-[EGF-like domain protein] + UDP + H(+)</text>
        <dbReference type="Rhea" id="RHEA:70531"/>
        <dbReference type="Rhea" id="RHEA-COMP:17922"/>
        <dbReference type="Rhea" id="RHEA-COMP:17923"/>
        <dbReference type="ChEBI" id="CHEBI:15378"/>
        <dbReference type="ChEBI" id="CHEBI:57705"/>
        <dbReference type="ChEBI" id="CHEBI:58223"/>
        <dbReference type="ChEBI" id="CHEBI:189631"/>
        <dbReference type="ChEBI" id="CHEBI:189634"/>
        <dbReference type="EC" id="2.4.1.222"/>
    </reaction>
</comment>
<comment type="catalytic activity">
    <reaction evidence="2">
        <text>3-O-(alpha-L-fucosyl)-L-seryl-[EGF-like domain protein] + UDP-N-acetyl-alpha-D-glucosamine = 3-O-(N-acetyl-beta-D-glucosaminyl-(1-&gt;3)-alpha-L-fucosyl)-L-seryl-[EGF-like domain protein] + UDP + H(+)</text>
        <dbReference type="Rhea" id="RHEA:70511"/>
        <dbReference type="Rhea" id="RHEA-COMP:17919"/>
        <dbReference type="Rhea" id="RHEA-COMP:17920"/>
        <dbReference type="ChEBI" id="CHEBI:15378"/>
        <dbReference type="ChEBI" id="CHEBI:57705"/>
        <dbReference type="ChEBI" id="CHEBI:58223"/>
        <dbReference type="ChEBI" id="CHEBI:189632"/>
        <dbReference type="ChEBI" id="CHEBI:189633"/>
        <dbReference type="EC" id="2.4.1.222"/>
    </reaction>
</comment>
<comment type="cofactor">
    <cofactor evidence="2">
        <name>Mn(2+)</name>
        <dbReference type="ChEBI" id="CHEBI:29035"/>
    </cofactor>
    <text evidence="2">Has some activity with cobalt but not with magnesium, calcium and zinc.</text>
</comment>
<comment type="subcellular location">
    <subcellularLocation>
        <location evidence="4">Golgi apparatus membrane</location>
        <topology evidence="4">Single-pass type II membrane protein</topology>
    </subcellularLocation>
</comment>
<comment type="similarity">
    <text evidence="4">Belongs to the glycosyltransferase 31 family.</text>
</comment>
<organism>
    <name type="scientific">Xenopus laevis</name>
    <name type="common">African clawed frog</name>
    <dbReference type="NCBI Taxonomy" id="8355"/>
    <lineage>
        <taxon>Eukaryota</taxon>
        <taxon>Metazoa</taxon>
        <taxon>Chordata</taxon>
        <taxon>Craniata</taxon>
        <taxon>Vertebrata</taxon>
        <taxon>Euteleostomi</taxon>
        <taxon>Amphibia</taxon>
        <taxon>Batrachia</taxon>
        <taxon>Anura</taxon>
        <taxon>Pipoidea</taxon>
        <taxon>Pipidae</taxon>
        <taxon>Xenopodinae</taxon>
        <taxon>Xenopus</taxon>
        <taxon>Xenopus</taxon>
    </lineage>
</organism>
<dbReference type="EC" id="2.4.1.222" evidence="2"/>
<dbReference type="EMBL" id="U77641">
    <property type="protein sequence ID" value="AAB19226.1"/>
    <property type="molecule type" value="mRNA"/>
</dbReference>
<dbReference type="RefSeq" id="NP_001080939.1">
    <property type="nucleotide sequence ID" value="NM_001087470.1"/>
</dbReference>
<dbReference type="SMR" id="P79949"/>
<dbReference type="CAZy" id="GT31">
    <property type="family name" value="Glycosyltransferase Family 31"/>
</dbReference>
<dbReference type="GlyCosmos" id="P79949">
    <property type="glycosylation" value="2 sites, No reported glycans"/>
</dbReference>
<dbReference type="GeneID" id="394282"/>
<dbReference type="KEGG" id="xla:394282"/>
<dbReference type="AGR" id="Xenbase:XB-GENE-864975"/>
<dbReference type="CTD" id="394282"/>
<dbReference type="Xenbase" id="XB-GENE-864975">
    <property type="gene designation" value="rfng.L"/>
</dbReference>
<dbReference type="OrthoDB" id="8959630at2759"/>
<dbReference type="Proteomes" id="UP000186698">
    <property type="component" value="Chromosome 9_10L"/>
</dbReference>
<dbReference type="Bgee" id="394282">
    <property type="expression patterns" value="Expressed in testis and 19 other cell types or tissues"/>
</dbReference>
<dbReference type="GO" id="GO:0000139">
    <property type="term" value="C:Golgi membrane"/>
    <property type="evidence" value="ECO:0007669"/>
    <property type="project" value="UniProtKB-SubCell"/>
</dbReference>
<dbReference type="GO" id="GO:0046872">
    <property type="term" value="F:metal ion binding"/>
    <property type="evidence" value="ECO:0007669"/>
    <property type="project" value="UniProtKB-KW"/>
</dbReference>
<dbReference type="GO" id="GO:0033829">
    <property type="term" value="F:O-fucosylpeptide 3-beta-N-acetylglucosaminyltransferase activity"/>
    <property type="evidence" value="ECO:0000318"/>
    <property type="project" value="GO_Central"/>
</dbReference>
<dbReference type="GO" id="GO:0008593">
    <property type="term" value="P:regulation of Notch signaling pathway"/>
    <property type="evidence" value="ECO:0000250"/>
    <property type="project" value="UniProtKB"/>
</dbReference>
<dbReference type="FunFam" id="3.90.550.50:FF:000003">
    <property type="entry name" value="Beta-1,3-N-acetylglucosaminyltransferase"/>
    <property type="match status" value="1"/>
</dbReference>
<dbReference type="Gene3D" id="3.90.550.50">
    <property type="match status" value="1"/>
</dbReference>
<dbReference type="InterPro" id="IPR003378">
    <property type="entry name" value="Fringe-like_glycosylTrfase"/>
</dbReference>
<dbReference type="PANTHER" id="PTHR10811">
    <property type="entry name" value="FRINGE-RELATED"/>
    <property type="match status" value="1"/>
</dbReference>
<dbReference type="Pfam" id="PF02434">
    <property type="entry name" value="Fringe"/>
    <property type="match status" value="1"/>
</dbReference>
<keyword id="KW-0217">Developmental protein</keyword>
<keyword id="KW-1015">Disulfide bond</keyword>
<keyword id="KW-0325">Glycoprotein</keyword>
<keyword id="KW-0328">Glycosyltransferase</keyword>
<keyword id="KW-0333">Golgi apparatus</keyword>
<keyword id="KW-0464">Manganese</keyword>
<keyword id="KW-0472">Membrane</keyword>
<keyword id="KW-0479">Metal-binding</keyword>
<keyword id="KW-1185">Reference proteome</keyword>
<keyword id="KW-0735">Signal-anchor</keyword>
<keyword id="KW-0808">Transferase</keyword>
<keyword id="KW-0812">Transmembrane</keyword>
<keyword id="KW-1133">Transmembrane helix</keyword>
<feature type="chain" id="PRO_0000219190" description="Beta-1,3-N-acetylglucosaminyltransferase radical fringe">
    <location>
        <begin position="1"/>
        <end position="340"/>
    </location>
</feature>
<feature type="topological domain" description="Cytoplasmic" evidence="3">
    <location>
        <begin position="1"/>
        <end position="4"/>
    </location>
</feature>
<feature type="transmembrane region" description="Helical; Signal-anchor for type II membrane protein" evidence="3">
    <location>
        <begin position="5"/>
        <end position="25"/>
    </location>
</feature>
<feature type="topological domain" description="Lumenal" evidence="3">
    <location>
        <begin position="26"/>
        <end position="340"/>
    </location>
</feature>
<feature type="active site" evidence="1">
    <location>
        <position position="272"/>
    </location>
</feature>
<feature type="binding site" evidence="1">
    <location>
        <position position="110"/>
    </location>
    <ligand>
        <name>substrate</name>
    </ligand>
</feature>
<feature type="binding site" evidence="1">
    <location>
        <position position="183"/>
    </location>
    <ligand>
        <name>substrate</name>
    </ligand>
</feature>
<feature type="binding site" evidence="1">
    <location>
        <position position="184"/>
    </location>
    <ligand>
        <name>Mn(2+)</name>
        <dbReference type="ChEBI" id="CHEBI:29035"/>
    </ligand>
</feature>
<feature type="binding site" evidence="1">
    <location>
        <position position="296"/>
    </location>
    <ligand>
        <name>Mn(2+)</name>
        <dbReference type="ChEBI" id="CHEBI:29035"/>
    </ligand>
</feature>
<feature type="glycosylation site" description="N-linked (GlcNAc...) asparagine" evidence="3">
    <location>
        <position position="42"/>
    </location>
</feature>
<feature type="glycosylation site" description="N-linked (GlcNAc...) asparagine" evidence="3">
    <location>
        <position position="149"/>
    </location>
</feature>
<feature type="disulfide bond" evidence="1">
    <location>
        <begin position="150"/>
        <end position="161"/>
    </location>
</feature>
<feature type="disulfide bond" evidence="1">
    <location>
        <begin position="179"/>
        <end position="242"/>
    </location>
</feature>
<reference key="1">
    <citation type="journal article" date="1996" name="Science">
        <title>The secreted product of Xenopus gene lunatic Fringe, a vertebrate signaling molecule.</title>
        <authorList>
            <person name="Wu J.Y."/>
            <person name="Wen L."/>
            <person name="Zhang W.-J."/>
            <person name="Rao Y."/>
        </authorList>
    </citation>
    <scope>NUCLEOTIDE SEQUENCE [MRNA]</scope>
</reference>
<accession>P79949</accession>